<dbReference type="EMBL" id="CU928145">
    <property type="protein sequence ID" value="CAV00033.1"/>
    <property type="molecule type" value="Genomic_DNA"/>
</dbReference>
<dbReference type="RefSeq" id="WP_000301864.1">
    <property type="nucleotide sequence ID" value="NZ_CP028304.1"/>
</dbReference>
<dbReference type="SMR" id="B7L4K6"/>
<dbReference type="GeneID" id="93778670"/>
<dbReference type="KEGG" id="eck:EC55989_3733"/>
<dbReference type="HOGENOM" id="CLU_036235_2_1_6"/>
<dbReference type="Proteomes" id="UP000000746">
    <property type="component" value="Chromosome"/>
</dbReference>
<dbReference type="GO" id="GO:0005829">
    <property type="term" value="C:cytosol"/>
    <property type="evidence" value="ECO:0007669"/>
    <property type="project" value="UniProtKB-ARBA"/>
</dbReference>
<dbReference type="GO" id="GO:0015934">
    <property type="term" value="C:large ribosomal subunit"/>
    <property type="evidence" value="ECO:0007669"/>
    <property type="project" value="InterPro"/>
</dbReference>
<dbReference type="GO" id="GO:0019843">
    <property type="term" value="F:rRNA binding"/>
    <property type="evidence" value="ECO:0007669"/>
    <property type="project" value="UniProtKB-UniRule"/>
</dbReference>
<dbReference type="GO" id="GO:0003735">
    <property type="term" value="F:structural constituent of ribosome"/>
    <property type="evidence" value="ECO:0007669"/>
    <property type="project" value="InterPro"/>
</dbReference>
<dbReference type="GO" id="GO:0016740">
    <property type="term" value="F:transferase activity"/>
    <property type="evidence" value="ECO:0007669"/>
    <property type="project" value="InterPro"/>
</dbReference>
<dbReference type="GO" id="GO:0002181">
    <property type="term" value="P:cytoplasmic translation"/>
    <property type="evidence" value="ECO:0007669"/>
    <property type="project" value="TreeGrafter"/>
</dbReference>
<dbReference type="FunFam" id="2.30.30.30:FF:000001">
    <property type="entry name" value="50S ribosomal protein L2"/>
    <property type="match status" value="1"/>
</dbReference>
<dbReference type="FunFam" id="2.40.50.140:FF:000003">
    <property type="entry name" value="50S ribosomal protein L2"/>
    <property type="match status" value="1"/>
</dbReference>
<dbReference type="FunFam" id="4.10.950.10:FF:000001">
    <property type="entry name" value="50S ribosomal protein L2"/>
    <property type="match status" value="1"/>
</dbReference>
<dbReference type="Gene3D" id="2.30.30.30">
    <property type="match status" value="1"/>
</dbReference>
<dbReference type="Gene3D" id="2.40.50.140">
    <property type="entry name" value="Nucleic acid-binding proteins"/>
    <property type="match status" value="1"/>
</dbReference>
<dbReference type="Gene3D" id="4.10.950.10">
    <property type="entry name" value="Ribosomal protein L2, domain 3"/>
    <property type="match status" value="1"/>
</dbReference>
<dbReference type="HAMAP" id="MF_01320_B">
    <property type="entry name" value="Ribosomal_uL2_B"/>
    <property type="match status" value="1"/>
</dbReference>
<dbReference type="InterPro" id="IPR012340">
    <property type="entry name" value="NA-bd_OB-fold"/>
</dbReference>
<dbReference type="InterPro" id="IPR014722">
    <property type="entry name" value="Rib_uL2_dom2"/>
</dbReference>
<dbReference type="InterPro" id="IPR002171">
    <property type="entry name" value="Ribosomal_uL2"/>
</dbReference>
<dbReference type="InterPro" id="IPR005880">
    <property type="entry name" value="Ribosomal_uL2_bac/org-type"/>
</dbReference>
<dbReference type="InterPro" id="IPR022669">
    <property type="entry name" value="Ribosomal_uL2_C"/>
</dbReference>
<dbReference type="InterPro" id="IPR022671">
    <property type="entry name" value="Ribosomal_uL2_CS"/>
</dbReference>
<dbReference type="InterPro" id="IPR014726">
    <property type="entry name" value="Ribosomal_uL2_dom3"/>
</dbReference>
<dbReference type="InterPro" id="IPR022666">
    <property type="entry name" value="Ribosomal_uL2_RNA-bd_dom"/>
</dbReference>
<dbReference type="InterPro" id="IPR008991">
    <property type="entry name" value="Translation_prot_SH3-like_sf"/>
</dbReference>
<dbReference type="NCBIfam" id="TIGR01171">
    <property type="entry name" value="rplB_bact"/>
    <property type="match status" value="1"/>
</dbReference>
<dbReference type="PANTHER" id="PTHR13691:SF5">
    <property type="entry name" value="LARGE RIBOSOMAL SUBUNIT PROTEIN UL2M"/>
    <property type="match status" value="1"/>
</dbReference>
<dbReference type="PANTHER" id="PTHR13691">
    <property type="entry name" value="RIBOSOMAL PROTEIN L2"/>
    <property type="match status" value="1"/>
</dbReference>
<dbReference type="Pfam" id="PF00181">
    <property type="entry name" value="Ribosomal_L2"/>
    <property type="match status" value="1"/>
</dbReference>
<dbReference type="Pfam" id="PF03947">
    <property type="entry name" value="Ribosomal_L2_C"/>
    <property type="match status" value="1"/>
</dbReference>
<dbReference type="PIRSF" id="PIRSF002158">
    <property type="entry name" value="Ribosomal_L2"/>
    <property type="match status" value="1"/>
</dbReference>
<dbReference type="SMART" id="SM01383">
    <property type="entry name" value="Ribosomal_L2"/>
    <property type="match status" value="1"/>
</dbReference>
<dbReference type="SMART" id="SM01382">
    <property type="entry name" value="Ribosomal_L2_C"/>
    <property type="match status" value="1"/>
</dbReference>
<dbReference type="SUPFAM" id="SSF50249">
    <property type="entry name" value="Nucleic acid-binding proteins"/>
    <property type="match status" value="1"/>
</dbReference>
<dbReference type="SUPFAM" id="SSF50104">
    <property type="entry name" value="Translation proteins SH3-like domain"/>
    <property type="match status" value="1"/>
</dbReference>
<dbReference type="PROSITE" id="PS00467">
    <property type="entry name" value="RIBOSOMAL_L2"/>
    <property type="match status" value="1"/>
</dbReference>
<organism>
    <name type="scientific">Escherichia coli (strain 55989 / EAEC)</name>
    <dbReference type="NCBI Taxonomy" id="585055"/>
    <lineage>
        <taxon>Bacteria</taxon>
        <taxon>Pseudomonadati</taxon>
        <taxon>Pseudomonadota</taxon>
        <taxon>Gammaproteobacteria</taxon>
        <taxon>Enterobacterales</taxon>
        <taxon>Enterobacteriaceae</taxon>
        <taxon>Escherichia</taxon>
    </lineage>
</organism>
<name>RL2_ECO55</name>
<accession>B7L4K6</accession>
<protein>
    <recommendedName>
        <fullName evidence="1">Large ribosomal subunit protein uL2</fullName>
    </recommendedName>
    <alternativeName>
        <fullName evidence="3">50S ribosomal protein L2</fullName>
    </alternativeName>
</protein>
<comment type="function">
    <text evidence="1">One of the primary rRNA binding proteins. Required for association of the 30S and 50S subunits to form the 70S ribosome, for tRNA binding and peptide bond formation. It has been suggested to have peptidyltransferase activity; this is somewhat controversial. Makes several contacts with the 16S rRNA in the 70S ribosome.</text>
</comment>
<comment type="subunit">
    <text evidence="1">Part of the 50S ribosomal subunit. Forms a bridge to the 30S subunit in the 70S ribosome.</text>
</comment>
<comment type="similarity">
    <text evidence="1">Belongs to the universal ribosomal protein uL2 family.</text>
</comment>
<gene>
    <name evidence="1" type="primary">rplB</name>
    <name type="ordered locus">EC55989_3733</name>
</gene>
<reference key="1">
    <citation type="journal article" date="2009" name="PLoS Genet.">
        <title>Organised genome dynamics in the Escherichia coli species results in highly diverse adaptive paths.</title>
        <authorList>
            <person name="Touchon M."/>
            <person name="Hoede C."/>
            <person name="Tenaillon O."/>
            <person name="Barbe V."/>
            <person name="Baeriswyl S."/>
            <person name="Bidet P."/>
            <person name="Bingen E."/>
            <person name="Bonacorsi S."/>
            <person name="Bouchier C."/>
            <person name="Bouvet O."/>
            <person name="Calteau A."/>
            <person name="Chiapello H."/>
            <person name="Clermont O."/>
            <person name="Cruveiller S."/>
            <person name="Danchin A."/>
            <person name="Diard M."/>
            <person name="Dossat C."/>
            <person name="Karoui M.E."/>
            <person name="Frapy E."/>
            <person name="Garry L."/>
            <person name="Ghigo J.M."/>
            <person name="Gilles A.M."/>
            <person name="Johnson J."/>
            <person name="Le Bouguenec C."/>
            <person name="Lescat M."/>
            <person name="Mangenot S."/>
            <person name="Martinez-Jehanne V."/>
            <person name="Matic I."/>
            <person name="Nassif X."/>
            <person name="Oztas S."/>
            <person name="Petit M.A."/>
            <person name="Pichon C."/>
            <person name="Rouy Z."/>
            <person name="Ruf C.S."/>
            <person name="Schneider D."/>
            <person name="Tourret J."/>
            <person name="Vacherie B."/>
            <person name="Vallenet D."/>
            <person name="Medigue C."/>
            <person name="Rocha E.P.C."/>
            <person name="Denamur E."/>
        </authorList>
    </citation>
    <scope>NUCLEOTIDE SEQUENCE [LARGE SCALE GENOMIC DNA]</scope>
    <source>
        <strain>55989 / EAEC</strain>
    </source>
</reference>
<evidence type="ECO:0000255" key="1">
    <source>
        <dbReference type="HAMAP-Rule" id="MF_01320"/>
    </source>
</evidence>
<evidence type="ECO:0000256" key="2">
    <source>
        <dbReference type="SAM" id="MobiDB-lite"/>
    </source>
</evidence>
<evidence type="ECO:0000305" key="3"/>
<feature type="chain" id="PRO_1000165748" description="Large ribosomal subunit protein uL2">
    <location>
        <begin position="1"/>
        <end position="273"/>
    </location>
</feature>
<feature type="region of interest" description="Disordered" evidence="2">
    <location>
        <begin position="28"/>
        <end position="53"/>
    </location>
</feature>
<feature type="region of interest" description="Disordered" evidence="2">
    <location>
        <begin position="221"/>
        <end position="273"/>
    </location>
</feature>
<feature type="compositionally biased region" description="Low complexity" evidence="2">
    <location>
        <begin position="39"/>
        <end position="48"/>
    </location>
</feature>
<feature type="modified residue" description="N6-acetyllysine" evidence="1">
    <location>
        <position position="242"/>
    </location>
</feature>
<keyword id="KW-0007">Acetylation</keyword>
<keyword id="KW-1185">Reference proteome</keyword>
<keyword id="KW-0687">Ribonucleoprotein</keyword>
<keyword id="KW-0689">Ribosomal protein</keyword>
<keyword id="KW-0694">RNA-binding</keyword>
<keyword id="KW-0699">rRNA-binding</keyword>
<sequence>MAVVKCKPTSPGRRHVVKVVNPELHKGKPFAPLLEKNSKSGGRNNNGRITTRHIGGGHKQAYRIVDFKRNKDGIPAVVERLEYDPNRSANIALVLYKDGERRYILAPKGLKAGDQIQSGVDAAIKPGNTLPMRNIPVGSTVHNVEMKPGKGGQLARSAGTYVQIVARDGAYVTLRLRSGEMRKVEADCRATLGEVGNAEHMLRVLGKAGAARWRGVRPTVRGTAMNPVDHPHGGGEGRNFGKHPVTPWGVQTKGKKTRSNKRTDKFIVRRRSK</sequence>
<proteinExistence type="inferred from homology"/>